<keyword id="KW-0002">3D-structure</keyword>
<keyword id="KW-0025">Alternative splicing</keyword>
<keyword id="KW-0219">Diabetes mellitus</keyword>
<keyword id="KW-0903">Direct protein sequencing</keyword>
<keyword id="KW-1015">Disulfide bond</keyword>
<keyword id="KW-0325">Glycoprotein</keyword>
<keyword id="KW-0378">Hydrolase</keyword>
<keyword id="KW-0442">Lipid degradation</keyword>
<keyword id="KW-0443">Lipid metabolism</keyword>
<keyword id="KW-1267">Proteomics identification</keyword>
<keyword id="KW-1185">Reference proteome</keyword>
<keyword id="KW-0677">Repeat</keyword>
<keyword id="KW-0964">Secreted</keyword>
<keyword id="KW-0719">Serine esterase</keyword>
<keyword id="KW-0732">Signal</keyword>
<comment type="function">
    <text evidence="2 5 13 14 16">Catalyzes the hydrolysis of a wide range of substrates including cholesteryl esters, phospholipids, lysophospholipids, di- and tri-acylglycerols, and fatty acid esters of hydroxy fatty acids (FAHFAs) (PubMed:10220579, PubMed:27509211, PubMed:27650499, PubMed:8471055). Preferentially hydrolyzes FAHFAs with the ester bond further away from the carboxylate. Unsaturated FAHFAs are hydrolyzed more quickly than saturated FAHFAs (By similarity). Has an essential role in the complete digestion of dietary lipids and their intestinal absorption, along with the absorption of fat-soluble vitamins (PubMed:10220579, PubMed:27509211, PubMed:27650499, PubMed:8471055).</text>
</comment>
<comment type="catalytic activity">
    <reaction evidence="16">
        <text>a triacylglycerol + H2O = a diacylglycerol + a fatty acid + H(+)</text>
        <dbReference type="Rhea" id="RHEA:12044"/>
        <dbReference type="ChEBI" id="CHEBI:15377"/>
        <dbReference type="ChEBI" id="CHEBI:15378"/>
        <dbReference type="ChEBI" id="CHEBI:17855"/>
        <dbReference type="ChEBI" id="CHEBI:18035"/>
        <dbReference type="ChEBI" id="CHEBI:28868"/>
        <dbReference type="EC" id="3.1.1.3"/>
    </reaction>
    <physiologicalReaction direction="left-to-right" evidence="21">
        <dbReference type="Rhea" id="RHEA:12045"/>
    </physiologicalReaction>
</comment>
<comment type="catalytic activity">
    <reaction evidence="5">
        <text>1,2,3-tri-(9Z-octadecenoyl)-glycerol + H2O = di-(9Z)-octadecenoylglycerol + (9Z)-octadecenoate + H(+)</text>
        <dbReference type="Rhea" id="RHEA:38575"/>
        <dbReference type="ChEBI" id="CHEBI:15377"/>
        <dbReference type="ChEBI" id="CHEBI:15378"/>
        <dbReference type="ChEBI" id="CHEBI:30823"/>
        <dbReference type="ChEBI" id="CHEBI:53753"/>
        <dbReference type="ChEBI" id="CHEBI:75945"/>
    </reaction>
    <physiologicalReaction direction="left-to-right" evidence="18">
        <dbReference type="Rhea" id="RHEA:38576"/>
    </physiologicalReaction>
</comment>
<comment type="catalytic activity">
    <reaction evidence="14">
        <text>1,2,3-trioctanoylglycerol + H2O = dioctanoylglycerol + octanoate + H(+)</text>
        <dbReference type="Rhea" id="RHEA:47864"/>
        <dbReference type="ChEBI" id="CHEBI:15377"/>
        <dbReference type="ChEBI" id="CHEBI:15378"/>
        <dbReference type="ChEBI" id="CHEBI:25646"/>
        <dbReference type="ChEBI" id="CHEBI:76978"/>
        <dbReference type="ChEBI" id="CHEBI:88066"/>
    </reaction>
    <physiologicalReaction direction="left-to-right" evidence="20">
        <dbReference type="Rhea" id="RHEA:47865"/>
    </physiologicalReaction>
</comment>
<comment type="catalytic activity">
    <reaction evidence="16">
        <text>a sterol ester + H2O = a sterol + a fatty acid + H(+)</text>
        <dbReference type="Rhea" id="RHEA:10100"/>
        <dbReference type="ChEBI" id="CHEBI:15377"/>
        <dbReference type="ChEBI" id="CHEBI:15378"/>
        <dbReference type="ChEBI" id="CHEBI:15889"/>
        <dbReference type="ChEBI" id="CHEBI:28868"/>
        <dbReference type="ChEBI" id="CHEBI:35915"/>
        <dbReference type="EC" id="3.1.1.13"/>
    </reaction>
    <physiologicalReaction direction="left-to-right" evidence="21">
        <dbReference type="Rhea" id="RHEA:10101"/>
    </physiologicalReaction>
</comment>
<comment type="catalytic activity">
    <reaction evidence="1">
        <text>cholesteryl (9Z-octadecenoate) + H2O = cholesterol + (9Z)-octadecenoate + H(+)</text>
        <dbReference type="Rhea" id="RHEA:33875"/>
        <dbReference type="ChEBI" id="CHEBI:15377"/>
        <dbReference type="ChEBI" id="CHEBI:15378"/>
        <dbReference type="ChEBI" id="CHEBI:16113"/>
        <dbReference type="ChEBI" id="CHEBI:30823"/>
        <dbReference type="ChEBI" id="CHEBI:46898"/>
    </reaction>
    <physiologicalReaction direction="left-to-right" evidence="1">
        <dbReference type="Rhea" id="RHEA:33876"/>
    </physiologicalReaction>
</comment>
<comment type="catalytic activity">
    <reaction evidence="5">
        <text>an acetyl ester + H2O = an aliphatic alcohol + acetate + H(+)</text>
        <dbReference type="Rhea" id="RHEA:12957"/>
        <dbReference type="ChEBI" id="CHEBI:2571"/>
        <dbReference type="ChEBI" id="CHEBI:15377"/>
        <dbReference type="ChEBI" id="CHEBI:15378"/>
        <dbReference type="ChEBI" id="CHEBI:30089"/>
        <dbReference type="ChEBI" id="CHEBI:47622"/>
        <dbReference type="EC" id="3.1.1.6"/>
    </reaction>
    <physiologicalReaction direction="left-to-right" evidence="18">
        <dbReference type="Rhea" id="RHEA:12958"/>
    </physiologicalReaction>
</comment>
<comment type="catalytic activity">
    <reaction evidence="1">
        <text>a butanoate ester + H2O = an aliphatic alcohol + butanoate + H(+)</text>
        <dbReference type="Rhea" id="RHEA:47348"/>
        <dbReference type="ChEBI" id="CHEBI:2571"/>
        <dbReference type="ChEBI" id="CHEBI:15377"/>
        <dbReference type="ChEBI" id="CHEBI:15378"/>
        <dbReference type="ChEBI" id="CHEBI:17968"/>
        <dbReference type="ChEBI" id="CHEBI:50477"/>
    </reaction>
    <physiologicalReaction direction="left-to-right" evidence="1">
        <dbReference type="Rhea" id="RHEA:47349"/>
    </physiologicalReaction>
</comment>
<comment type="catalytic activity">
    <reaction evidence="13">
        <text>9-hexadecanoyloxy-octadecanoate + H2O = 9-hydroxy-octadecanoate + hexadecanoate + H(+)</text>
        <dbReference type="Rhea" id="RHEA:52052"/>
        <dbReference type="ChEBI" id="CHEBI:7896"/>
        <dbReference type="ChEBI" id="CHEBI:15377"/>
        <dbReference type="ChEBI" id="CHEBI:15378"/>
        <dbReference type="ChEBI" id="CHEBI:83670"/>
        <dbReference type="ChEBI" id="CHEBI:136286"/>
    </reaction>
    <physiologicalReaction direction="left-to-right" evidence="19">
        <dbReference type="Rhea" id="RHEA:52053"/>
    </physiologicalReaction>
</comment>
<comment type="catalytic activity">
    <reaction evidence="13">
        <text>9-(9Z-octadecenoyloxy)-octadecanoate + H2O = 9-hydroxy-octadecanoate + (9Z)-octadecenoate + H(+)</text>
        <dbReference type="Rhea" id="RHEA:52048"/>
        <dbReference type="ChEBI" id="CHEBI:15377"/>
        <dbReference type="ChEBI" id="CHEBI:15378"/>
        <dbReference type="ChEBI" id="CHEBI:30823"/>
        <dbReference type="ChEBI" id="CHEBI:136282"/>
        <dbReference type="ChEBI" id="CHEBI:136286"/>
    </reaction>
    <physiologicalReaction direction="left-to-right" evidence="19">
        <dbReference type="Rhea" id="RHEA:52049"/>
    </physiologicalReaction>
</comment>
<comment type="catalytic activity">
    <reaction evidence="1">
        <text>1-hexadecanoyl-sn-glycero-3-phosphocholine + H2O = sn-glycerol 3-phosphocholine + hexadecanoate + H(+)</text>
        <dbReference type="Rhea" id="RHEA:40435"/>
        <dbReference type="ChEBI" id="CHEBI:7896"/>
        <dbReference type="ChEBI" id="CHEBI:15377"/>
        <dbReference type="ChEBI" id="CHEBI:15378"/>
        <dbReference type="ChEBI" id="CHEBI:16870"/>
        <dbReference type="ChEBI" id="CHEBI:72998"/>
    </reaction>
    <physiologicalReaction direction="left-to-right" evidence="1">
        <dbReference type="Rhea" id="RHEA:40436"/>
    </physiologicalReaction>
</comment>
<comment type="catalytic activity">
    <reaction evidence="2">
        <text>12-hexadecanoyloxy-octadecanoate + H2O = 12-hydroxyoctadecanoate + hexadecanoate + H(+)</text>
        <dbReference type="Rhea" id="RHEA:52056"/>
        <dbReference type="ChEBI" id="CHEBI:7896"/>
        <dbReference type="ChEBI" id="CHEBI:15377"/>
        <dbReference type="ChEBI" id="CHEBI:15378"/>
        <dbReference type="ChEBI" id="CHEBI:83677"/>
        <dbReference type="ChEBI" id="CHEBI:84201"/>
    </reaction>
    <physiologicalReaction direction="left-to-right" evidence="2">
        <dbReference type="Rhea" id="RHEA:52057"/>
    </physiologicalReaction>
</comment>
<comment type="catalytic activity">
    <reaction evidence="2">
        <text>12-(9Z-octadecenoyloxy)-octadecanoate + H2O = 12-hydroxyoctadecanoate + (9Z)-octadecenoate + H(+)</text>
        <dbReference type="Rhea" id="RHEA:52060"/>
        <dbReference type="ChEBI" id="CHEBI:15377"/>
        <dbReference type="ChEBI" id="CHEBI:15378"/>
        <dbReference type="ChEBI" id="CHEBI:30823"/>
        <dbReference type="ChEBI" id="CHEBI:84201"/>
        <dbReference type="ChEBI" id="CHEBI:136302"/>
    </reaction>
    <physiologicalReaction direction="left-to-right" evidence="2">
        <dbReference type="Rhea" id="RHEA:52061"/>
    </physiologicalReaction>
</comment>
<comment type="catalytic activity">
    <reaction evidence="2">
        <text>13-(9Z-octadecenoyloxy)-octadecanoate + H2O = 13-hydroxy-octadecanoate + (9Z)-octadecenoate + H(+)</text>
        <dbReference type="Rhea" id="RHEA:52064"/>
        <dbReference type="ChEBI" id="CHEBI:15377"/>
        <dbReference type="ChEBI" id="CHEBI:15378"/>
        <dbReference type="ChEBI" id="CHEBI:30823"/>
        <dbReference type="ChEBI" id="CHEBI:136303"/>
        <dbReference type="ChEBI" id="CHEBI:136304"/>
    </reaction>
    <physiologicalReaction direction="left-to-right" evidence="2">
        <dbReference type="Rhea" id="RHEA:52065"/>
    </physiologicalReaction>
</comment>
<comment type="catalytic activity">
    <reaction evidence="2">
        <text>9-(9Z-hexadecenoyloxy)-octadecanoate + H2O = (9Z)-hexadecenoate + 9-hydroxy-octadecanoate + H(+)</text>
        <dbReference type="Rhea" id="RHEA:52068"/>
        <dbReference type="ChEBI" id="CHEBI:15377"/>
        <dbReference type="ChEBI" id="CHEBI:15378"/>
        <dbReference type="ChEBI" id="CHEBI:32372"/>
        <dbReference type="ChEBI" id="CHEBI:136286"/>
        <dbReference type="ChEBI" id="CHEBI:136309"/>
    </reaction>
    <physiologicalReaction direction="left-to-right" evidence="2">
        <dbReference type="Rhea" id="RHEA:52069"/>
    </physiologicalReaction>
</comment>
<comment type="catalytic activity">
    <reaction evidence="2">
        <text>12-(9Z-hexadecenoyloxy)-octadecanoate + H2O = 12-hydroxyoctadecanoate + (9Z)-hexadecenoate + H(+)</text>
        <dbReference type="Rhea" id="RHEA:52072"/>
        <dbReference type="ChEBI" id="CHEBI:15377"/>
        <dbReference type="ChEBI" id="CHEBI:15378"/>
        <dbReference type="ChEBI" id="CHEBI:32372"/>
        <dbReference type="ChEBI" id="CHEBI:84201"/>
        <dbReference type="ChEBI" id="CHEBI:136312"/>
    </reaction>
    <physiologicalReaction direction="left-to-right" evidence="2">
        <dbReference type="Rhea" id="RHEA:52073"/>
    </physiologicalReaction>
</comment>
<comment type="catalytic activity">
    <reaction evidence="2">
        <text>13-(9Z-hexadecenoyloxy)-octadecanoate + H2O = 13-hydroxy-octadecanoate + (9Z)-hexadecenoate + H(+)</text>
        <dbReference type="Rhea" id="RHEA:52076"/>
        <dbReference type="ChEBI" id="CHEBI:15377"/>
        <dbReference type="ChEBI" id="CHEBI:15378"/>
        <dbReference type="ChEBI" id="CHEBI:32372"/>
        <dbReference type="ChEBI" id="CHEBI:136304"/>
        <dbReference type="ChEBI" id="CHEBI:136315"/>
    </reaction>
    <physiologicalReaction direction="left-to-right" evidence="2">
        <dbReference type="Rhea" id="RHEA:52077"/>
    </physiologicalReaction>
</comment>
<comment type="catalytic activity">
    <reaction evidence="2">
        <text>12-octadecanoyloxy-octadecanoate + H2O = 12-hydroxyoctadecanoate + octadecanoate + H(+)</text>
        <dbReference type="Rhea" id="RHEA:52080"/>
        <dbReference type="ChEBI" id="CHEBI:15377"/>
        <dbReference type="ChEBI" id="CHEBI:15378"/>
        <dbReference type="ChEBI" id="CHEBI:25629"/>
        <dbReference type="ChEBI" id="CHEBI:84201"/>
        <dbReference type="ChEBI" id="CHEBI:136330"/>
    </reaction>
    <physiologicalReaction direction="left-to-right" evidence="2">
        <dbReference type="Rhea" id="RHEA:52081"/>
    </physiologicalReaction>
</comment>
<comment type="catalytic activity">
    <reaction evidence="2">
        <text>13-octadecanoyloxy-octadecanoate + H2O = 13-hydroxy-octadecanoate + octadecanoate + H(+)</text>
        <dbReference type="Rhea" id="RHEA:52084"/>
        <dbReference type="ChEBI" id="CHEBI:15377"/>
        <dbReference type="ChEBI" id="CHEBI:15378"/>
        <dbReference type="ChEBI" id="CHEBI:25629"/>
        <dbReference type="ChEBI" id="CHEBI:136304"/>
        <dbReference type="ChEBI" id="CHEBI:136335"/>
    </reaction>
    <physiologicalReaction direction="left-to-right" evidence="2">
        <dbReference type="Rhea" id="RHEA:52085"/>
    </physiologicalReaction>
</comment>
<comment type="catalytic activity">
    <reaction evidence="2">
        <text>5-(9Z-hexadecenoyloxy)-octadecanoate + H2O = 5-hydroxy-octadecanoate + (9Z)-hexadecenoate + H(+)</text>
        <dbReference type="Rhea" id="RHEA:52092"/>
        <dbReference type="ChEBI" id="CHEBI:15377"/>
        <dbReference type="ChEBI" id="CHEBI:15378"/>
        <dbReference type="ChEBI" id="CHEBI:32372"/>
        <dbReference type="ChEBI" id="CHEBI:136369"/>
        <dbReference type="ChEBI" id="CHEBI:136370"/>
    </reaction>
    <physiologicalReaction direction="left-to-right" evidence="2">
        <dbReference type="Rhea" id="RHEA:52093"/>
    </physiologicalReaction>
</comment>
<comment type="catalytic activity">
    <reaction evidence="2">
        <text>9-octadecanoyloxy-octadecanoate + H2O = 9-hydroxy-octadecanoate + octadecanoate + H(+)</text>
        <dbReference type="Rhea" id="RHEA:52096"/>
        <dbReference type="ChEBI" id="CHEBI:15377"/>
        <dbReference type="ChEBI" id="CHEBI:15378"/>
        <dbReference type="ChEBI" id="CHEBI:25629"/>
        <dbReference type="ChEBI" id="CHEBI:136286"/>
        <dbReference type="ChEBI" id="CHEBI:136373"/>
    </reaction>
    <physiologicalReaction direction="left-to-right" evidence="2">
        <dbReference type="Rhea" id="RHEA:52097"/>
    </physiologicalReaction>
</comment>
<comment type="activity regulation">
    <text evidence="5">Activated by bile salts such as sodium taurocholate.</text>
</comment>
<comment type="biophysicochemical properties">
    <kinetics>
        <KM evidence="16">24 uM for lipoyl-4-aminobenzoate</KM>
        <KM evidence="16">15 uM for triacetin</KM>
        <Vmax evidence="16">45.5 pmol/min/mg enzyme toward lipoyl-4-aminobenzoate</Vmax>
        <Vmax evidence="16">323.0 pmol/min/mg enzyme toward triacetin</Vmax>
    </kinetics>
</comment>
<comment type="subunit">
    <text evidence="6">Interacts with CLC.</text>
</comment>
<comment type="subcellular location">
    <subcellularLocation>
        <location evidence="12">Secreted</location>
    </subcellularLocation>
</comment>
<comment type="alternative products">
    <event type="alternative splicing"/>
    <isoform>
        <id>P19835-1</id>
        <name>Long</name>
        <sequence type="displayed"/>
    </isoform>
    <isoform>
        <id>P19835-2</id>
        <name>Short</name>
        <sequence type="described" ref="VSP_001463"/>
    </isoform>
</comment>
<comment type="tissue specificity">
    <text evidence="6 12">Mammary gland and pancreas. Detected in pancreatic and duodenal juice (at protein level) (PubMed:21784842). Expressed by eosinophils.</text>
</comment>
<comment type="PTM">
    <text evidence="12">N- and O-glycosylated.</text>
</comment>
<comment type="polymorphism">
    <text evidence="7 8 9">The variable number of tandem repeats (VNTR)-region in exon 11 is highly polymorphic, and VNTR number varies between 3 and 23. The most common allele contains 16 repeats (PubMed:12166660, PubMed:16369531, PubMed:19760265). Some alleles contain common single base insertions in the VNTR region that are predicted to lead to protein truncation and may be associated with an increased risk of exocrine pancreatic dysfunction in autoimmune diabetes (PubMed:16369531).</text>
</comment>
<comment type="disease" evidence="8">
    <disease id="DI-01949">
        <name>Maturity-onset diabetes of the young 8 with exocrine dysfunction</name>
        <acronym>MODY8</acronym>
        <description>An autosomal dominant form of diabetes characterized by a primary defect in insulin secretion, exocrine pancreatic dysfunction, altered pancreatic morphology, recurrent abdominal pain, and fecal elastase deficiency. Disease onset is at less than 25 years of age.</description>
        <dbReference type="MIM" id="609812"/>
    </disease>
    <text evidence="8">The disease is caused by variants affecting the gene represented in this entry. Single base deletions in the VNTR-region, that result in frame shift and protein truncation, have been identified as disease causing variants in MODY8 families (PubMed:16369531).</text>
</comment>
<comment type="similarity">
    <text evidence="17">Belongs to the type-B carboxylesterase/lipase family.</text>
</comment>
<comment type="sequence caution" evidence="17">
    <conflict type="erroneous initiation">
        <sequence resource="EMBL-CDS" id="AAA51973"/>
    </conflict>
</comment>
<comment type="sequence caution" evidence="17">
    <conflict type="erroneous initiation">
        <sequence resource="EMBL-CDS" id="AAA52014"/>
    </conflict>
</comment>
<comment type="sequence caution" evidence="17">
    <conflict type="erroneous initiation">
        <sequence resource="EMBL-CDS" id="AAC26514"/>
    </conflict>
</comment>
<comment type="sequence caution" evidence="17">
    <conflict type="erroneous initiation">
        <sequence resource="EMBL-CDS" id="CAA38325"/>
    </conflict>
</comment>
<comment type="sequence caution" evidence="17">
    <conflict type="erroneous initiation">
        <sequence resource="EMBL-CDS" id="EAW88033"/>
    </conflict>
</comment>
<sequence>MGRLQLVVLGLTCCWAVASAAKLGAVYTEGGFVEGVNKKLGLLGDSVDIFKGIPFAAPTKALENPQPHPGWQGTLKAKNFKKRCLQATITQDSTYGDEDCLYLNIWVPQGRKQVSRDLPVMIWIYGGAFLMGSGHGANFLNNYLYDGEEIATRGNVIVVTFNYRVGPLGFLSTGDANLPGNYGLRDQHMAIAWVKRNIAAFGGDPNNITLFGESAGGASVSLQTLSPYNKGLIRRAISQSGVALSPWVIQKNPLFWAKKVAEKVGCPVGDAARMAQCLKVTDPRALTLAYKVPLAGLEYPMLHYVGFVPVIDGDFIPADPINLYANAADIDYIAGTNNMDGHIFASIDMPAINKGNKKVTEEDFYKLVSEFTITKGLRGAKTTFDVYTESWAQDPSQENKKKTVVDFETDVLFLVPTEIALAQHRANAKSAKTYAYLFSHPSRMPVYPKWVGADHADDIQYVFGKPFATPTGYRPQDRTVSKAMIAYWTNFAKTGDPNMGDSAVPTHWEPYTTENSGYLEITKKMGSSSMKRSLRTNFLRYWTLTYLALPTVTDQEATPVPPTGDSEATPVPPTGDSETAPVPPTGDSGAPPVPPTGDSGAPPVPPTGDSGAPPVPPTGDSGAPPVPPTGDSGAPPVPPTGDSGAPPVPPTGDSGAPPVPPTGDSGAPPVPPTGDAGPPPVPPTGDSGAPPVPPTGDSGAPPVTPTGDSETAPVPPTGDSGAPPVPPTGDSEAAPVPPTDDSKEAQMPAVIRF</sequence>
<dbReference type="EC" id="3.1.1.13" evidence="16"/>
<dbReference type="EC" id="3.1.1.3" evidence="16"/>
<dbReference type="EC" id="3.1.1.6" evidence="5"/>
<dbReference type="EMBL" id="X54457">
    <property type="protein sequence ID" value="CAA38325.1"/>
    <property type="status" value="ALT_INIT"/>
    <property type="molecule type" value="mRNA"/>
</dbReference>
<dbReference type="EMBL" id="M85201">
    <property type="protein sequence ID" value="AAA52014.1"/>
    <property type="status" value="ALT_INIT"/>
    <property type="molecule type" value="mRNA"/>
</dbReference>
<dbReference type="EMBL" id="M54994">
    <property type="protein sequence ID" value="AAA63211.1"/>
    <property type="molecule type" value="mRNA"/>
</dbReference>
<dbReference type="EMBL" id="M94579">
    <property type="protein sequence ID" value="AAA51973.1"/>
    <property type="status" value="ALT_INIT"/>
    <property type="molecule type" value="Genomic_DNA"/>
</dbReference>
<dbReference type="EMBL" id="S79774">
    <property type="protein sequence ID" value="AAB35488.2"/>
    <property type="molecule type" value="mRNA"/>
</dbReference>
<dbReference type="EMBL" id="AF072711">
    <property type="protein sequence ID" value="AAC26514.1"/>
    <property type="status" value="ALT_INIT"/>
    <property type="molecule type" value="Genomic_DNA"/>
</dbReference>
<dbReference type="EMBL" id="AL162417">
    <property type="status" value="NOT_ANNOTATED_CDS"/>
    <property type="molecule type" value="Genomic_DNA"/>
</dbReference>
<dbReference type="EMBL" id="CH471090">
    <property type="protein sequence ID" value="EAW88033.1"/>
    <property type="status" value="ALT_INIT"/>
    <property type="molecule type" value="Genomic_DNA"/>
</dbReference>
<dbReference type="CCDS" id="CCDS43896.2">
    <molecule id="P19835-1"/>
</dbReference>
<dbReference type="PIR" id="S13586">
    <property type="entry name" value="S13586"/>
</dbReference>
<dbReference type="RefSeq" id="NP_001798.3">
    <molecule id="P19835-1"/>
    <property type="nucleotide sequence ID" value="NM_001807.6"/>
</dbReference>
<dbReference type="PDB" id="1F6W">
    <property type="method" value="X-ray"/>
    <property type="resolution" value="2.30 A"/>
    <property type="chains" value="A=21-553"/>
</dbReference>
<dbReference type="PDB" id="1JMY">
    <property type="method" value="X-ray"/>
    <property type="resolution" value="2.60 A"/>
    <property type="chains" value="A=21-538"/>
</dbReference>
<dbReference type="PDB" id="6H0T">
    <property type="method" value="X-ray"/>
    <property type="resolution" value="1.90 A"/>
    <property type="chains" value="A=22-553"/>
</dbReference>
<dbReference type="PDB" id="6H0V">
    <property type="method" value="X-ray"/>
    <property type="resolution" value="2.20 A"/>
    <property type="chains" value="A=22-553"/>
</dbReference>
<dbReference type="PDB" id="6H18">
    <property type="method" value="X-ray"/>
    <property type="resolution" value="1.85 A"/>
    <property type="chains" value="A=22-553"/>
</dbReference>
<dbReference type="PDB" id="6H19">
    <property type="method" value="X-ray"/>
    <property type="resolution" value="1.89 A"/>
    <property type="chains" value="A=22-553"/>
</dbReference>
<dbReference type="PDB" id="6H1A">
    <property type="method" value="X-ray"/>
    <property type="resolution" value="1.75 A"/>
    <property type="chains" value="A=22-553"/>
</dbReference>
<dbReference type="PDBsum" id="1F6W"/>
<dbReference type="PDBsum" id="1JMY"/>
<dbReference type="PDBsum" id="6H0T"/>
<dbReference type="PDBsum" id="6H0V"/>
<dbReference type="PDBsum" id="6H18"/>
<dbReference type="PDBsum" id="6H19"/>
<dbReference type="PDBsum" id="6H1A"/>
<dbReference type="SMR" id="P19835"/>
<dbReference type="FunCoup" id="P19835">
    <property type="interactions" value="16"/>
</dbReference>
<dbReference type="IntAct" id="P19835">
    <property type="interactions" value="1"/>
</dbReference>
<dbReference type="STRING" id="9606.ENSP00000501111"/>
<dbReference type="BindingDB" id="P19835"/>
<dbReference type="ChEMBL" id="CHEMBL3219"/>
<dbReference type="DrugBank" id="DB04348">
    <property type="generic name" value="Taurocholic acid"/>
</dbReference>
<dbReference type="SwissLipids" id="SLP:000000874"/>
<dbReference type="ESTHER" id="human-CEL">
    <property type="family name" value="Cholesterol_esterase"/>
</dbReference>
<dbReference type="MEROPS" id="S09.985"/>
<dbReference type="GlyConnect" id="74">
    <property type="glycosylation" value="15 N-Linked glycans (1 site), 9 O-Linked glycans"/>
</dbReference>
<dbReference type="GlyCosmos" id="P19835">
    <property type="glycosylation" value="11 sites, 43 glycans"/>
</dbReference>
<dbReference type="GlyGen" id="P19835">
    <property type="glycosylation" value="22 sites, 26 N-linked glycans (2 sites), 12 O-linked glycans (2 sites)"/>
</dbReference>
<dbReference type="iPTMnet" id="P19835"/>
<dbReference type="PhosphoSitePlus" id="P19835"/>
<dbReference type="BioMuta" id="CEL"/>
<dbReference type="DMDM" id="251757481"/>
<dbReference type="MassIVE" id="P19835"/>
<dbReference type="PaxDb" id="9606-ENSP00000361151"/>
<dbReference type="PeptideAtlas" id="P19835"/>
<dbReference type="ProteomicsDB" id="53692">
    <molecule id="P19835-1"/>
</dbReference>
<dbReference type="ProteomicsDB" id="53693">
    <molecule id="P19835-2"/>
</dbReference>
<dbReference type="Antibodypedia" id="1990">
    <property type="antibodies" value="228 antibodies from 27 providers"/>
</dbReference>
<dbReference type="Ensembl" id="ENST00000372080.8">
    <molecule id="P19835-1"/>
    <property type="protein sequence ID" value="ENSP00000361151.6"/>
    <property type="gene ID" value="ENSG00000170835.17"/>
</dbReference>
<dbReference type="GeneID" id="1056"/>
<dbReference type="MANE-Select" id="ENST00000372080.8">
    <property type="protein sequence ID" value="ENSP00000361151.6"/>
    <property type="RefSeq nucleotide sequence ID" value="NM_001807.6"/>
    <property type="RefSeq protein sequence ID" value="NP_001798.3"/>
</dbReference>
<dbReference type="AGR" id="HGNC:1848"/>
<dbReference type="GeneCards" id="CEL"/>
<dbReference type="GeneReviews" id="CEL"/>
<dbReference type="HGNC" id="HGNC:1848">
    <property type="gene designation" value="CEL"/>
</dbReference>
<dbReference type="HPA" id="ENSG00000170835">
    <property type="expression patterns" value="Tissue enriched (pancreas)"/>
</dbReference>
<dbReference type="MalaCards" id="CEL"/>
<dbReference type="MIM" id="114840">
    <property type="type" value="gene"/>
</dbReference>
<dbReference type="MIM" id="609812">
    <property type="type" value="phenotype"/>
</dbReference>
<dbReference type="neXtProt" id="NX_P19835"/>
<dbReference type="OpenTargets" id="ENSG00000170835"/>
<dbReference type="Orphanet" id="552">
    <property type="disease" value="MODY"/>
</dbReference>
<dbReference type="PharmGKB" id="PA26391"/>
<dbReference type="VEuPathDB" id="HostDB:ENSG00000170835"/>
<dbReference type="eggNOG" id="KOG1516">
    <property type="taxonomic scope" value="Eukaryota"/>
</dbReference>
<dbReference type="GeneTree" id="ENSGT00940000156231"/>
<dbReference type="InParanoid" id="P19835"/>
<dbReference type="OrthoDB" id="19653at2759"/>
<dbReference type="PAN-GO" id="P19835">
    <property type="GO annotations" value="5 GO annotations based on evolutionary models"/>
</dbReference>
<dbReference type="PhylomeDB" id="P19835"/>
<dbReference type="TreeFam" id="TF315470"/>
<dbReference type="BRENDA" id="3.1.1.13">
    <property type="organism ID" value="2681"/>
</dbReference>
<dbReference type="PathwayCommons" id="P19835"/>
<dbReference type="Reactome" id="R-HSA-192456">
    <property type="pathway name" value="Digestion of dietary lipid"/>
</dbReference>
<dbReference type="Reactome" id="R-HSA-9925561">
    <property type="pathway name" value="Developmental Lineage of Pancreatic Acinar Cells"/>
</dbReference>
<dbReference type="SABIO-RK" id="P19835"/>
<dbReference type="SignaLink" id="P19835"/>
<dbReference type="ChiTaRS" id="CEL">
    <property type="organism name" value="human"/>
</dbReference>
<dbReference type="EvolutionaryTrace" id="P19835"/>
<dbReference type="Pharos" id="P19835">
    <property type="development level" value="Tchem"/>
</dbReference>
<dbReference type="PRO" id="PR:P19835"/>
<dbReference type="Proteomes" id="UP000005640">
    <property type="component" value="Chromosome 9"/>
</dbReference>
<dbReference type="RNAct" id="P19835">
    <property type="molecule type" value="protein"/>
</dbReference>
<dbReference type="Bgee" id="ENSG00000170835">
    <property type="expression patterns" value="Expressed in body of pancreas and 115 other cell types or tissues"/>
</dbReference>
<dbReference type="GO" id="GO:0005737">
    <property type="term" value="C:cytoplasm"/>
    <property type="evidence" value="ECO:0000250"/>
    <property type="project" value="UniProtKB"/>
</dbReference>
<dbReference type="GO" id="GO:0070062">
    <property type="term" value="C:extracellular exosome"/>
    <property type="evidence" value="ECO:0007005"/>
    <property type="project" value="UniProtKB"/>
</dbReference>
<dbReference type="GO" id="GO:0005576">
    <property type="term" value="C:extracellular region"/>
    <property type="evidence" value="ECO:0000304"/>
    <property type="project" value="Reactome"/>
</dbReference>
<dbReference type="GO" id="GO:0005615">
    <property type="term" value="C:extracellular space"/>
    <property type="evidence" value="ECO:0007005"/>
    <property type="project" value="UniProtKB"/>
</dbReference>
<dbReference type="GO" id="GO:0016020">
    <property type="term" value="C:membrane"/>
    <property type="evidence" value="ECO:0007669"/>
    <property type="project" value="GOC"/>
</dbReference>
<dbReference type="GO" id="GO:0008126">
    <property type="term" value="F:acetylesterase activity"/>
    <property type="evidence" value="ECO:0007669"/>
    <property type="project" value="UniProtKB-EC"/>
</dbReference>
<dbReference type="GO" id="GO:0003824">
    <property type="term" value="F:catalytic activity"/>
    <property type="evidence" value="ECO:0000304"/>
    <property type="project" value="UniProtKB"/>
</dbReference>
<dbReference type="GO" id="GO:0008201">
    <property type="term" value="F:heparin binding"/>
    <property type="evidence" value="ECO:0000303"/>
    <property type="project" value="UniProtKB"/>
</dbReference>
<dbReference type="GO" id="GO:0016787">
    <property type="term" value="F:hydrolase activity"/>
    <property type="evidence" value="ECO:0000304"/>
    <property type="project" value="UniProtKB"/>
</dbReference>
<dbReference type="GO" id="GO:0050253">
    <property type="term" value="F:retinyl-palmitate esterase activity"/>
    <property type="evidence" value="ECO:0000318"/>
    <property type="project" value="GO_Central"/>
</dbReference>
<dbReference type="GO" id="GO:0004771">
    <property type="term" value="F:sterol ester esterase activity"/>
    <property type="evidence" value="ECO:0000318"/>
    <property type="project" value="GO_Central"/>
</dbReference>
<dbReference type="GO" id="GO:0004806">
    <property type="term" value="F:triacylglycerol lipase activity"/>
    <property type="evidence" value="ECO:0000318"/>
    <property type="project" value="GO_Central"/>
</dbReference>
<dbReference type="GO" id="GO:0046514">
    <property type="term" value="P:ceramide catabolic process"/>
    <property type="evidence" value="ECO:0000318"/>
    <property type="project" value="GO_Central"/>
</dbReference>
<dbReference type="GO" id="GO:0030299">
    <property type="term" value="P:intestinal cholesterol absorption"/>
    <property type="evidence" value="ECO:0000314"/>
    <property type="project" value="UniProtKB"/>
</dbReference>
<dbReference type="GO" id="GO:0006629">
    <property type="term" value="P:lipid metabolic process"/>
    <property type="evidence" value="ECO:0000303"/>
    <property type="project" value="UniProtKB"/>
</dbReference>
<dbReference type="GO" id="GO:0030157">
    <property type="term" value="P:pancreatic juice secretion"/>
    <property type="evidence" value="ECO:0000314"/>
    <property type="project" value="UniProtKB"/>
</dbReference>
<dbReference type="CDD" id="cd00312">
    <property type="entry name" value="Esterase_lipase"/>
    <property type="match status" value="1"/>
</dbReference>
<dbReference type="FunFam" id="3.40.50.1820:FF:000100">
    <property type="entry name" value="Carboxylic ester hydrolase"/>
    <property type="match status" value="1"/>
</dbReference>
<dbReference type="Gene3D" id="3.40.50.1820">
    <property type="entry name" value="alpha/beta hydrolase"/>
    <property type="match status" value="1"/>
</dbReference>
<dbReference type="InterPro" id="IPR029058">
    <property type="entry name" value="AB_hydrolase_fold"/>
</dbReference>
<dbReference type="InterPro" id="IPR002018">
    <property type="entry name" value="CarbesteraseB"/>
</dbReference>
<dbReference type="InterPro" id="IPR019826">
    <property type="entry name" value="Carboxylesterase_B_AS"/>
</dbReference>
<dbReference type="InterPro" id="IPR019819">
    <property type="entry name" value="Carboxylesterase_B_CS"/>
</dbReference>
<dbReference type="InterPro" id="IPR032059">
    <property type="entry name" value="Mucin-like"/>
</dbReference>
<dbReference type="InterPro" id="IPR051093">
    <property type="entry name" value="Neuroligin/BSAL"/>
</dbReference>
<dbReference type="PANTHER" id="PTHR43903">
    <property type="entry name" value="NEUROLIGIN"/>
    <property type="match status" value="1"/>
</dbReference>
<dbReference type="Pfam" id="PF00135">
    <property type="entry name" value="COesterase"/>
    <property type="match status" value="1"/>
</dbReference>
<dbReference type="Pfam" id="PF16058">
    <property type="entry name" value="Mucin-like"/>
    <property type="match status" value="1"/>
</dbReference>
<dbReference type="SUPFAM" id="SSF53474">
    <property type="entry name" value="alpha/beta-Hydrolases"/>
    <property type="match status" value="1"/>
</dbReference>
<dbReference type="PROSITE" id="PS00122">
    <property type="entry name" value="CARBOXYLESTERASE_B_1"/>
    <property type="match status" value="1"/>
</dbReference>
<dbReference type="PROSITE" id="PS00941">
    <property type="entry name" value="CARBOXYLESTERASE_B_2"/>
    <property type="match status" value="1"/>
</dbReference>
<protein>
    <recommendedName>
        <fullName>Bile salt-activated lipase</fullName>
        <shortName>BAL</shortName>
        <ecNumber evidence="16">3.1.1.13</ecNumber>
        <ecNumber evidence="16">3.1.1.3</ecNumber>
        <ecNumber evidence="5">3.1.1.6</ecNumber>
    </recommendedName>
    <alternativeName>
        <fullName>Bile salt-stimulated lipase</fullName>
        <shortName>BSSL</shortName>
    </alternativeName>
    <alternativeName>
        <fullName>Bucelipase</fullName>
    </alternativeName>
    <alternativeName>
        <fullName>Carboxyl ester lipase</fullName>
    </alternativeName>
    <alternativeName>
        <fullName>Cholesterol esterase</fullName>
    </alternativeName>
    <alternativeName>
        <fullName>Pancreatic lysophospholipase</fullName>
    </alternativeName>
    <alternativeName>
        <fullName>Sterol esterase</fullName>
    </alternativeName>
</protein>
<organism>
    <name type="scientific">Homo sapiens</name>
    <name type="common">Human</name>
    <dbReference type="NCBI Taxonomy" id="9606"/>
    <lineage>
        <taxon>Eukaryota</taxon>
        <taxon>Metazoa</taxon>
        <taxon>Chordata</taxon>
        <taxon>Craniata</taxon>
        <taxon>Vertebrata</taxon>
        <taxon>Euteleostomi</taxon>
        <taxon>Mammalia</taxon>
        <taxon>Eutheria</taxon>
        <taxon>Euarchontoglires</taxon>
        <taxon>Primates</taxon>
        <taxon>Haplorrhini</taxon>
        <taxon>Catarrhini</taxon>
        <taxon>Hominidae</taxon>
        <taxon>Homo</taxon>
    </lineage>
</organism>
<proteinExistence type="evidence at protein level"/>
<accession>P19835</accession>
<accession>Q16398</accession>
<accession>Q5T7U7</accession>
<accession>Q9UCH1</accession>
<accession>Q9UP41</accession>
<evidence type="ECO:0000250" key="1">
    <source>
        <dbReference type="UniProtKB" id="P07882"/>
    </source>
</evidence>
<evidence type="ECO:0000250" key="2">
    <source>
        <dbReference type="UniProtKB" id="Q64285"/>
    </source>
</evidence>
<evidence type="ECO:0000255" key="3">
    <source>
        <dbReference type="PROSITE-ProRule" id="PRU10039"/>
    </source>
</evidence>
<evidence type="ECO:0000256" key="4">
    <source>
        <dbReference type="SAM" id="MobiDB-lite"/>
    </source>
</evidence>
<evidence type="ECO:0000269" key="5">
    <source>
    </source>
</evidence>
<evidence type="ECO:0000269" key="6">
    <source>
    </source>
</evidence>
<evidence type="ECO:0000269" key="7">
    <source>
    </source>
</evidence>
<evidence type="ECO:0000269" key="8">
    <source>
    </source>
</evidence>
<evidence type="ECO:0000269" key="9">
    <source>
    </source>
</evidence>
<evidence type="ECO:0000269" key="10">
    <source>
    </source>
</evidence>
<evidence type="ECO:0000269" key="11">
    <source>
    </source>
</evidence>
<evidence type="ECO:0000269" key="12">
    <source>
    </source>
</evidence>
<evidence type="ECO:0000269" key="13">
    <source>
    </source>
</evidence>
<evidence type="ECO:0000269" key="14">
    <source>
    </source>
</evidence>
<evidence type="ECO:0000269" key="15">
    <source>
    </source>
</evidence>
<evidence type="ECO:0000269" key="16">
    <source>
    </source>
</evidence>
<evidence type="ECO:0000305" key="17"/>
<evidence type="ECO:0000305" key="18">
    <source>
    </source>
</evidence>
<evidence type="ECO:0000305" key="19">
    <source>
    </source>
</evidence>
<evidence type="ECO:0000305" key="20">
    <source>
    </source>
</evidence>
<evidence type="ECO:0000305" key="21">
    <source>
    </source>
</evidence>
<evidence type="ECO:0007829" key="22">
    <source>
        <dbReference type="PDB" id="1F6W"/>
    </source>
</evidence>
<evidence type="ECO:0007829" key="23">
    <source>
        <dbReference type="PDB" id="1JMY"/>
    </source>
</evidence>
<evidence type="ECO:0007829" key="24">
    <source>
        <dbReference type="PDB" id="6H0T"/>
    </source>
</evidence>
<evidence type="ECO:0007829" key="25">
    <source>
        <dbReference type="PDB" id="6H0V"/>
    </source>
</evidence>
<evidence type="ECO:0007829" key="26">
    <source>
        <dbReference type="PDB" id="6H1A"/>
    </source>
</evidence>
<gene>
    <name type="primary">CEL</name>
    <name type="synonym">BAL</name>
</gene>
<reference key="1">
    <citation type="journal article" date="1990" name="Eur. J. Biochem.">
        <title>cDNA cloning of human-milk bile-salt-stimulated lipase and evidence for its identity to pancreatic carboxylic ester hydrolase.</title>
        <authorList>
            <person name="Nilsson J."/>
            <person name="Blaeckberg L."/>
            <person name="Carlsson P."/>
            <person name="Enerbaeck S."/>
            <person name="Hernell O."/>
            <person name="Bjursell G."/>
        </authorList>
    </citation>
    <scope>NUCLEOTIDE SEQUENCE [MRNA] (ISOFORM LONG)</scope>
    <scope>PARTIAL PROTEIN SEQUENCE</scope>
    <source>
        <tissue>Mammary gland</tissue>
    </source>
</reference>
<reference key="2">
    <citation type="journal article" date="1990" name="FEBS Lett.">
        <title>Sequence identity between human pancreatic cholesterol esterase and bile salt-stimulated milk lipase.</title>
        <authorList>
            <person name="Hui D.Y."/>
            <person name="Kissel J.A."/>
        </authorList>
    </citation>
    <scope>NUCLEOTIDE SEQUENCE [MRNA] (ISOFORM LONG)</scope>
    <source>
        <tissue>Pancreas</tissue>
    </source>
</reference>
<reference key="3">
    <citation type="journal article" date="1991" name="Biochemistry">
        <title>Structure of human milk bile salt activated lipase.</title>
        <authorList>
            <person name="Baba T."/>
            <person name="Downs D."/>
            <person name="Jackson K.W."/>
            <person name="Tang J."/>
            <person name="Wang C.-S."/>
        </authorList>
    </citation>
    <scope>NUCLEOTIDE SEQUENCE [MRNA] (ISOFORM LONG)</scope>
    <scope>PROTEIN SEQUENCE OF 21-81; 122-126; 190-194; 275-279; 302-306; 445-449; 485-490; 500-507; 526-528 AND 531-538</scope>
    <source>
        <tissue>Mammary gland</tissue>
        <tissue>Milk</tissue>
    </source>
</reference>
<reference key="4">
    <citation type="journal article" date="1992" name="Genomics">
        <title>Genomic organization, sequence analysis, and chromosomal localization of the human carboxyl ester lipase (CEL) gene and a CEL-like (CELL) gene.</title>
        <authorList>
            <person name="Lidberg U."/>
            <person name="Nilsson J."/>
            <person name="Stroemberg K."/>
            <person name="Stenman G."/>
            <person name="Sahlin P."/>
            <person name="Enerbaeck S."/>
            <person name="Bjursell G."/>
        </authorList>
    </citation>
    <scope>NUCLEOTIDE SEQUENCE [GENOMIC DNA]</scope>
</reference>
<reference key="5">
    <citation type="journal article" date="1995" name="Biochim. Biophys. Acta">
        <title>Bile salt-dependent lipase transcripts in human fetal tissues.</title>
        <authorList>
            <person name="Roudani S."/>
            <person name="Miralles F."/>
            <person name="Margotat A."/>
            <person name="Escribano M.J."/>
            <person name="Lombardo D."/>
        </authorList>
    </citation>
    <scope>NUCLEOTIDE SEQUENCE [MRNA] (ISOFORM LONG)</scope>
</reference>
<reference key="6">
    <citation type="journal article" date="1998" name="Mamm. Genome">
        <title>Structure and organization of the human carboxyl ester lipase locus.</title>
        <authorList>
            <person name="Madeyski K."/>
            <person name="Lidberg U."/>
            <person name="Bjursell G."/>
            <person name="Nilsson J."/>
        </authorList>
    </citation>
    <scope>NUCLEOTIDE SEQUENCE [GENOMIC DNA]</scope>
</reference>
<reference key="7">
    <citation type="journal article" date="2004" name="Nature">
        <title>DNA sequence and analysis of human chromosome 9.</title>
        <authorList>
            <person name="Humphray S.J."/>
            <person name="Oliver K."/>
            <person name="Hunt A.R."/>
            <person name="Plumb R.W."/>
            <person name="Loveland J.E."/>
            <person name="Howe K.L."/>
            <person name="Andrews T.D."/>
            <person name="Searle S."/>
            <person name="Hunt S.E."/>
            <person name="Scott C.E."/>
            <person name="Jones M.C."/>
            <person name="Ainscough R."/>
            <person name="Almeida J.P."/>
            <person name="Ambrose K.D."/>
            <person name="Ashwell R.I.S."/>
            <person name="Babbage A.K."/>
            <person name="Babbage S."/>
            <person name="Bagguley C.L."/>
            <person name="Bailey J."/>
            <person name="Banerjee R."/>
            <person name="Barker D.J."/>
            <person name="Barlow K.F."/>
            <person name="Bates K."/>
            <person name="Beasley H."/>
            <person name="Beasley O."/>
            <person name="Bird C.P."/>
            <person name="Bray-Allen S."/>
            <person name="Brown A.J."/>
            <person name="Brown J.Y."/>
            <person name="Burford D."/>
            <person name="Burrill W."/>
            <person name="Burton J."/>
            <person name="Carder C."/>
            <person name="Carter N.P."/>
            <person name="Chapman J.C."/>
            <person name="Chen Y."/>
            <person name="Clarke G."/>
            <person name="Clark S.Y."/>
            <person name="Clee C.M."/>
            <person name="Clegg S."/>
            <person name="Collier R.E."/>
            <person name="Corby N."/>
            <person name="Crosier M."/>
            <person name="Cummings A.T."/>
            <person name="Davies J."/>
            <person name="Dhami P."/>
            <person name="Dunn M."/>
            <person name="Dutta I."/>
            <person name="Dyer L.W."/>
            <person name="Earthrowl M.E."/>
            <person name="Faulkner L."/>
            <person name="Fleming C.J."/>
            <person name="Frankish A."/>
            <person name="Frankland J.A."/>
            <person name="French L."/>
            <person name="Fricker D.G."/>
            <person name="Garner P."/>
            <person name="Garnett J."/>
            <person name="Ghori J."/>
            <person name="Gilbert J.G.R."/>
            <person name="Glison C."/>
            <person name="Grafham D.V."/>
            <person name="Gribble S."/>
            <person name="Griffiths C."/>
            <person name="Griffiths-Jones S."/>
            <person name="Grocock R."/>
            <person name="Guy J."/>
            <person name="Hall R.E."/>
            <person name="Hammond S."/>
            <person name="Harley J.L."/>
            <person name="Harrison E.S.I."/>
            <person name="Hart E.A."/>
            <person name="Heath P.D."/>
            <person name="Henderson C.D."/>
            <person name="Hopkins B.L."/>
            <person name="Howard P.J."/>
            <person name="Howden P.J."/>
            <person name="Huckle E."/>
            <person name="Johnson C."/>
            <person name="Johnson D."/>
            <person name="Joy A.A."/>
            <person name="Kay M."/>
            <person name="Keenan S."/>
            <person name="Kershaw J.K."/>
            <person name="Kimberley A.M."/>
            <person name="King A."/>
            <person name="Knights A."/>
            <person name="Laird G.K."/>
            <person name="Langford C."/>
            <person name="Lawlor S."/>
            <person name="Leongamornlert D.A."/>
            <person name="Leversha M."/>
            <person name="Lloyd C."/>
            <person name="Lloyd D.M."/>
            <person name="Lovell J."/>
            <person name="Martin S."/>
            <person name="Mashreghi-Mohammadi M."/>
            <person name="Matthews L."/>
            <person name="McLaren S."/>
            <person name="McLay K.E."/>
            <person name="McMurray A."/>
            <person name="Milne S."/>
            <person name="Nickerson T."/>
            <person name="Nisbett J."/>
            <person name="Nordsiek G."/>
            <person name="Pearce A.V."/>
            <person name="Peck A.I."/>
            <person name="Porter K.M."/>
            <person name="Pandian R."/>
            <person name="Pelan S."/>
            <person name="Phillimore B."/>
            <person name="Povey S."/>
            <person name="Ramsey Y."/>
            <person name="Rand V."/>
            <person name="Scharfe M."/>
            <person name="Sehra H.K."/>
            <person name="Shownkeen R."/>
            <person name="Sims S.K."/>
            <person name="Skuce C.D."/>
            <person name="Smith M."/>
            <person name="Steward C.A."/>
            <person name="Swarbreck D."/>
            <person name="Sycamore N."/>
            <person name="Tester J."/>
            <person name="Thorpe A."/>
            <person name="Tracey A."/>
            <person name="Tromans A."/>
            <person name="Thomas D.W."/>
            <person name="Wall M."/>
            <person name="Wallis J.M."/>
            <person name="West A.P."/>
            <person name="Whitehead S.L."/>
            <person name="Willey D.L."/>
            <person name="Williams S.A."/>
            <person name="Wilming L."/>
            <person name="Wray P.W."/>
            <person name="Young L."/>
            <person name="Ashurst J.L."/>
            <person name="Coulson A."/>
            <person name="Blocker H."/>
            <person name="Durbin R.M."/>
            <person name="Sulston J.E."/>
            <person name="Hubbard T."/>
            <person name="Jackson M.J."/>
            <person name="Bentley D.R."/>
            <person name="Beck S."/>
            <person name="Rogers J."/>
            <person name="Dunham I."/>
        </authorList>
    </citation>
    <scope>NUCLEOTIDE SEQUENCE [LARGE SCALE GENOMIC DNA]</scope>
</reference>
<reference key="8">
    <citation type="submission" date="2005-07" db="EMBL/GenBank/DDBJ databases">
        <authorList>
            <person name="Mural R.J."/>
            <person name="Istrail S."/>
            <person name="Sutton G.G."/>
            <person name="Florea L."/>
            <person name="Halpern A.L."/>
            <person name="Mobarry C.M."/>
            <person name="Lippert R."/>
            <person name="Walenz B."/>
            <person name="Shatkay H."/>
            <person name="Dew I."/>
            <person name="Miller J.R."/>
            <person name="Flanigan M.J."/>
            <person name="Edwards N.J."/>
            <person name="Bolanos R."/>
            <person name="Fasulo D."/>
            <person name="Halldorsson B.V."/>
            <person name="Hannenhalli S."/>
            <person name="Turner R."/>
            <person name="Yooseph S."/>
            <person name="Lu F."/>
            <person name="Nusskern D.R."/>
            <person name="Shue B.C."/>
            <person name="Zheng X.H."/>
            <person name="Zhong F."/>
            <person name="Delcher A.L."/>
            <person name="Huson D.H."/>
            <person name="Kravitz S.A."/>
            <person name="Mouchard L."/>
            <person name="Reinert K."/>
            <person name="Remington K.A."/>
            <person name="Clark A.G."/>
            <person name="Waterman M.S."/>
            <person name="Eichler E.E."/>
            <person name="Adams M.D."/>
            <person name="Hunkapiller M.W."/>
            <person name="Myers E.W."/>
            <person name="Venter J.C."/>
        </authorList>
    </citation>
    <scope>NUCLEOTIDE SEQUENCE [LARGE SCALE GENOMIC DNA]</scope>
</reference>
<reference key="9">
    <citation type="journal article" date="1993" name="Biochem. J.">
        <title>Lipoamidase activity in normal and mutagenized pancreatic cholesterol esterase (bile salt-stimulated lipase).</title>
        <authorList>
            <person name="Hui D.Y."/>
            <person name="Hayakawa K."/>
            <person name="Oizumi J."/>
        </authorList>
    </citation>
    <scope>PROTEIN SEQUENCE OF 53-76 AND 366-374</scope>
    <scope>FUNCTION</scope>
    <scope>CATALYTIC ACTIVITY</scope>
    <scope>BIOPHYSICOCHEMICAL PROPERTIES</scope>
    <scope>MUTAGENESIS OF HIS-455</scope>
    <source>
        <tissue>Milk</tissue>
    </source>
</reference>
<reference key="10">
    <citation type="journal article" date="1991" name="FEBS Lett.">
        <title>Human milk bile-salt stimulated lipase. Sequence similarity with rat lysophospholipase and homology with the active site region of cholinesterases.</title>
        <authorList>
            <person name="Christie D.L."/>
            <person name="Cleverly D.R."/>
            <person name="O'Connor C.J.O."/>
        </authorList>
    </citation>
    <scope>PARTIAL PROTEIN SEQUENCE</scope>
    <scope>ACTIVE SITE</scope>
</reference>
<reference key="11">
    <citation type="journal article" date="1995" name="Biochemistry">
        <title>Isolation and characterization of human milk bile salt-activated lipase C-tail fragment.</title>
        <authorList>
            <person name="Wang C.S."/>
            <person name="Dashti A."/>
            <person name="Jackson K.W."/>
            <person name="Yeh J.C."/>
            <person name="Cummings R.D."/>
            <person name="Tang J."/>
        </authorList>
    </citation>
    <scope>GLYCOSYLATION AT THR-558; THR-569; THR-579; THR-607; THR-618; THR-629; THR-640; THR-651; THR-662 AND THR-673</scope>
</reference>
<reference key="12">
    <citation type="journal article" date="1999" name="Glycobiology">
        <title>Structural characterization of the N-linked oligosaccharides in bile salt-stimulated lipase originated from human breast milk.</title>
        <authorList>
            <person name="Mechref Y."/>
            <person name="Chen P."/>
            <person name="Novotny M.V."/>
        </authorList>
    </citation>
    <scope>STRUCTURE OF N-LINKED CARBOHYDRATES</scope>
</reference>
<reference key="13">
    <citation type="journal article" date="1999" name="J. Biochem.">
        <title>Purification and characterization of bovine pancreatic bile salt-activated lipase.</title>
        <authorList>
            <person name="Tanaka H."/>
            <person name="Mierau I."/>
            <person name="Ito F."/>
        </authorList>
    </citation>
    <scope>FUNCTION</scope>
    <scope>CATALYTIC ACTIVITY</scope>
    <scope>ACTIVITY REGULATION</scope>
    <source>
        <tissue>Milk</tissue>
    </source>
</reference>
<reference key="14">
    <citation type="journal article" date="2002" name="J. Biol. Chem.">
        <title>Charcot-Leyden crystal protein (galectin-10) is not a dual function galectin with lysophospholipase activity but binds a lysophospholipase inhibitor in a novel structural fashion.</title>
        <authorList>
            <person name="Ackerman S.J."/>
            <person name="Liu L."/>
            <person name="Kwatia M.A."/>
            <person name="Savage M.P."/>
            <person name="Leonidas D.D."/>
            <person name="Swaminathan G.J."/>
            <person name="Acharya K.R."/>
        </authorList>
    </citation>
    <scope>INTERACTION WITH CLC</scope>
    <scope>TISSUE SPECIFICITY</scope>
</reference>
<reference key="15">
    <citation type="journal article" date="2002" name="J. Hum. Genet.">
        <title>Characterization of a VNTR polymorphism in the coding region of the CEL gene.</title>
        <authorList>
            <person name="Higuchi S."/>
            <person name="Nakamura Y."/>
            <person name="Saito S."/>
        </authorList>
    </citation>
    <scope>POLYMORPHISM</scope>
</reference>
<reference key="16">
    <citation type="journal article" date="2006" name="Nat. Genet.">
        <title>Mutations in the CEL VNTR cause a syndrome of diabetes and pancreatic exocrine dysfunction.</title>
        <authorList>
            <person name="Raeder H."/>
            <person name="Johansson S."/>
            <person name="Holm P.I."/>
            <person name="Haldorsen I.S."/>
            <person name="Mas E."/>
            <person name="Sbarra V."/>
            <person name="Nermoen I."/>
            <person name="Eide S.A."/>
            <person name="Grevle L."/>
            <person name="Bjoerkhaug L."/>
            <person name="Sagen J.V."/>
            <person name="Aksnes L."/>
            <person name="Soevik O."/>
            <person name="Lombardo D."/>
            <person name="Molven A."/>
            <person name="Njoelstad P.R."/>
        </authorList>
    </citation>
    <scope>INVOLVEMENT IN MODY8</scope>
    <scope>POLYMORPHISM</scope>
</reference>
<reference key="17">
    <citation type="journal article" date="2010" name="Hum. Genet.">
        <title>Mutations in the VNTR of the carboxyl-ester lipase gene (CEL) are a rare cause of monogenic diabetes.</title>
        <authorList>
            <person name="Torsvik J."/>
            <person name="Johansson S."/>
            <person name="Johansen A."/>
            <person name="Ek J."/>
            <person name="Minton J."/>
            <person name="Raeder H."/>
            <person name="Ellard S."/>
            <person name="Hattersley A."/>
            <person name="Pedersen O."/>
            <person name="Hansen T."/>
            <person name="Molven A."/>
            <person name="Njoelstad P.R."/>
        </authorList>
    </citation>
    <scope>POLYMORPHISM</scope>
</reference>
<reference key="18">
    <citation type="journal article" date="2011" name="J. Biol. Chem.">
        <title>Diabetes and pancreatic exocrine dysfunction due to mutations in the carboxyl ester lipase gene-maturity onset diabetes of the young (CEL-MODY): a protein misfolding disease.</title>
        <authorList>
            <person name="Johansson B.B."/>
            <person name="Torsvik J."/>
            <person name="Bjoerkhaug L."/>
            <person name="Vesterhus M."/>
            <person name="Ragvin A."/>
            <person name="Tjora E."/>
            <person name="Fjeld K."/>
            <person name="Hoem D."/>
            <person name="Johansson S."/>
            <person name="Raeder H."/>
            <person name="Lindquist S."/>
            <person name="Hernell O."/>
            <person name="Cnop M."/>
            <person name="Saraste J."/>
            <person name="Flatmark T."/>
            <person name="Molven A."/>
            <person name="Njoelstad P.R."/>
        </authorList>
    </citation>
    <scope>GLYCOSYLATION</scope>
    <scope>SUBCELLULAR LOCATION</scope>
    <scope>TISSUE SPECIFICITY</scope>
</reference>
<reference key="19">
    <citation type="journal article" date="2016" name="Biochemistry">
        <title>Branched fatty acid esters of hydroxy fatty acids are preferred substrates of the MODY8 protein carboxyl ester lipase.</title>
        <authorList>
            <person name="Kolar M.J."/>
            <person name="Kamat S.S."/>
            <person name="Parsons W.H."/>
            <person name="Homan E.A."/>
            <person name="Maher T."/>
            <person name="Peroni O.D."/>
            <person name="Syed I."/>
            <person name="Fjeld K."/>
            <person name="Molven A."/>
            <person name="Kahn B.B."/>
            <person name="Cravatt B.F."/>
            <person name="Saghatelian A."/>
        </authorList>
    </citation>
    <scope>FUNCTION</scope>
    <scope>CATALYTIC ACTIVITY</scope>
</reference>
<reference key="20">
    <citation type="journal article" date="2016" name="J. Biol. Chem.">
        <title>A carboxyl ester lipase (CEL) mutant causes chronic pancreatitis by forming intracellular aggregates that activate apoptosis.</title>
        <authorList>
            <person name="Xiao X."/>
            <person name="Jones G."/>
            <person name="Sevilla W.A."/>
            <person name="Stolz D.B."/>
            <person name="Magee K.E."/>
            <person name="Haughney M."/>
            <person name="Mukherjee A."/>
            <person name="Wang Y."/>
            <person name="Lowe M.E."/>
        </authorList>
    </citation>
    <scope>CATALYTIC ACTIVITY</scope>
    <scope>FUNCTION</scope>
</reference>
<reference key="21">
    <citation type="journal article" date="2000" name="Protein Sci.">
        <title>Crystal structure of the catalytic domain of human bile salt activated lipase.</title>
        <authorList>
            <person name="Terzyan S."/>
            <person name="Wang C.S."/>
            <person name="Downs D."/>
            <person name="Hunter B."/>
            <person name="Zhang X.C."/>
        </authorList>
    </citation>
    <scope>X-RAY CRYSTALLOGRAPHY (2.3 ANGSTROMS) OF 21-553</scope>
</reference>
<name>CEL_HUMAN</name>
<feature type="signal peptide" evidence="10">
    <location>
        <begin position="1"/>
        <end position="20"/>
    </location>
</feature>
<feature type="chain" id="PRO_0000008631" description="Bile salt-activated lipase">
    <location>
        <begin position="21"/>
        <end position="753"/>
    </location>
</feature>
<feature type="repeat" description="1">
    <location>
        <begin position="559"/>
        <end position="569"/>
    </location>
</feature>
<feature type="repeat" description="2">
    <location>
        <begin position="570"/>
        <end position="580"/>
    </location>
</feature>
<feature type="repeat" description="3">
    <location>
        <begin position="581"/>
        <end position="591"/>
    </location>
</feature>
<feature type="repeat" description="4">
    <location>
        <begin position="592"/>
        <end position="602"/>
    </location>
</feature>
<feature type="repeat" description="5">
    <location>
        <begin position="603"/>
        <end position="613"/>
    </location>
</feature>
<feature type="repeat" description="6">
    <location>
        <begin position="614"/>
        <end position="624"/>
    </location>
</feature>
<feature type="repeat" description="7">
    <location>
        <begin position="625"/>
        <end position="635"/>
    </location>
</feature>
<feature type="repeat" description="8">
    <location>
        <begin position="636"/>
        <end position="646"/>
    </location>
</feature>
<feature type="repeat" description="9">
    <location>
        <begin position="647"/>
        <end position="657"/>
    </location>
</feature>
<feature type="repeat" description="10">
    <location>
        <begin position="658"/>
        <end position="668"/>
    </location>
</feature>
<feature type="repeat" description="11">
    <location>
        <begin position="669"/>
        <end position="679"/>
    </location>
</feature>
<feature type="repeat" description="12">
    <location>
        <begin position="680"/>
        <end position="690"/>
    </location>
</feature>
<feature type="repeat" description="13">
    <location>
        <begin position="691"/>
        <end position="701"/>
    </location>
</feature>
<feature type="repeat" description="14">
    <location>
        <begin position="702"/>
        <end position="712"/>
    </location>
</feature>
<feature type="repeat" description="15">
    <location>
        <begin position="713"/>
        <end position="723"/>
    </location>
</feature>
<feature type="repeat" description="16">
    <location>
        <begin position="724"/>
        <end position="734"/>
    </location>
</feature>
<feature type="repeat" description="17">
    <location>
        <begin position="735"/>
        <end position="745"/>
    </location>
</feature>
<feature type="region of interest" description="Heparin-binding">
    <location>
        <begin position="21"/>
        <end position="121"/>
    </location>
</feature>
<feature type="region of interest" description="Disordered" evidence="4">
    <location>
        <begin position="555"/>
        <end position="753"/>
    </location>
</feature>
<feature type="region of interest" description="17 X 11 AA tandem repeats, glycodomain, O-linked (mucin type)">
    <location>
        <begin position="559"/>
        <end position="745"/>
    </location>
</feature>
<feature type="compositionally biased region" description="Pro residues" evidence="4">
    <location>
        <begin position="668"/>
        <end position="683"/>
    </location>
</feature>
<feature type="active site" description="Acyl-ester intermediate" evidence="3 11">
    <location>
        <position position="214"/>
    </location>
</feature>
<feature type="active site" description="Charge relay system" evidence="11">
    <location>
        <position position="340"/>
    </location>
</feature>
<feature type="active site" description="Charge relay system" evidence="11">
    <location>
        <position position="455"/>
    </location>
</feature>
<feature type="glycosylation site" id="CAR_000141" description="N-linked (GlcNAc...) (complex) asparagine">
    <location>
        <position position="207"/>
    </location>
</feature>
<feature type="glycosylation site" description="O-linked (GalNAc...) threonine" evidence="15">
    <location>
        <position position="558"/>
    </location>
</feature>
<feature type="glycosylation site" description="O-linked (GalNAc...) threonine" evidence="15">
    <location>
        <position position="569"/>
    </location>
</feature>
<feature type="glycosylation site" description="O-linked (GalNAc...) threonine" evidence="15">
    <location>
        <position position="579"/>
    </location>
</feature>
<feature type="glycosylation site" description="O-linked (GalNAc...) threonine" evidence="15">
    <location>
        <position position="607"/>
    </location>
</feature>
<feature type="glycosylation site" description="O-linked (GalNAc...) threonine" evidence="15">
    <location>
        <position position="618"/>
    </location>
</feature>
<feature type="glycosylation site" description="O-linked (GalNAc...) threonine" evidence="15">
    <location>
        <position position="629"/>
    </location>
</feature>
<feature type="glycosylation site" description="O-linked (GalNAc...) threonine" evidence="15">
    <location>
        <position position="640"/>
    </location>
</feature>
<feature type="glycosylation site" description="O-linked (GalNAc...) threonine" evidence="15">
    <location>
        <position position="651"/>
    </location>
</feature>
<feature type="glycosylation site" description="O-linked (GalNAc...) threonine" evidence="15">
    <location>
        <position position="662"/>
    </location>
</feature>
<feature type="glycosylation site" description="O-linked (GalNAc...) threonine" evidence="15">
    <location>
        <position position="673"/>
    </location>
</feature>
<feature type="disulfide bond">
    <location>
        <begin position="84"/>
        <end position="100"/>
    </location>
</feature>
<feature type="disulfide bond">
    <location>
        <begin position="266"/>
        <end position="277"/>
    </location>
</feature>
<feature type="splice variant" id="VSP_001463" description="In isoform Short." evidence="17">
    <location>
        <begin position="430"/>
        <end position="495"/>
    </location>
</feature>
<feature type="mutagenesis site" description="Abolishes lipase activity. Decreases Vmax for esterase activity by 2.5-fold." evidence="16">
    <original>H</original>
    <variation>Q</variation>
    <location>
        <position position="455"/>
    </location>
</feature>
<feature type="sequence conflict" description="In Ref. 9; AA sequence." evidence="17" ref="9">
    <location>
        <position position="73"/>
    </location>
</feature>
<feature type="sequence conflict" description="In Ref. 5; AAB35488." evidence="17" ref="5">
    <original>R</original>
    <variation>A</variation>
    <location>
        <position position="235"/>
    </location>
</feature>
<feature type="sequence conflict" description="In Ref. 5; AAB35488." evidence="17" ref="5">
    <original>RALTL</original>
    <variation>AAVTV</variation>
    <location>
        <begin position="284"/>
        <end position="288"/>
    </location>
</feature>
<feature type="sequence conflict" description="In Ref. 5; AAB35488." evidence="17" ref="5">
    <original>G</original>
    <variation>E</variation>
    <location>
        <position position="313"/>
    </location>
</feature>
<feature type="sequence conflict" description="In Ref. 5; AAB35488." evidence="17" ref="5">
    <original>T</original>
    <variation>I</variation>
    <location>
        <position position="403"/>
    </location>
</feature>
<feature type="sequence conflict" description="In Ref. 5; AAB35488." evidence="17" ref="5">
    <original>S</original>
    <variation>F</variation>
    <location>
        <position position="481"/>
    </location>
</feature>
<feature type="sequence conflict" description="In Ref. 5; AAB35488." evidence="17" ref="5">
    <original>A</original>
    <variation>P</variation>
    <location>
        <position position="689"/>
    </location>
</feature>
<feature type="strand" evidence="26">
    <location>
        <begin position="25"/>
        <end position="28"/>
    </location>
</feature>
<feature type="strand" evidence="26">
    <location>
        <begin position="31"/>
        <end position="34"/>
    </location>
</feature>
<feature type="strand" evidence="26">
    <location>
        <begin position="36"/>
        <end position="39"/>
    </location>
</feature>
<feature type="strand" evidence="26">
    <location>
        <begin position="41"/>
        <end position="44"/>
    </location>
</feature>
<feature type="strand" evidence="26">
    <location>
        <begin position="46"/>
        <end position="54"/>
    </location>
</feature>
<feature type="strand" evidence="26">
    <location>
        <begin position="72"/>
        <end position="76"/>
    </location>
</feature>
<feature type="strand" evidence="26">
    <location>
        <begin position="85"/>
        <end position="87"/>
    </location>
</feature>
<feature type="strand" evidence="26">
    <location>
        <begin position="91"/>
        <end position="95"/>
    </location>
</feature>
<feature type="strand" evidence="26">
    <location>
        <begin position="102"/>
        <end position="109"/>
    </location>
</feature>
<feature type="strand" evidence="26">
    <location>
        <begin position="111"/>
        <end position="113"/>
    </location>
</feature>
<feature type="strand" evidence="26">
    <location>
        <begin position="117"/>
        <end position="124"/>
    </location>
</feature>
<feature type="turn" evidence="26">
    <location>
        <begin position="128"/>
        <end position="130"/>
    </location>
</feature>
<feature type="strand" evidence="23">
    <location>
        <begin position="137"/>
        <end position="139"/>
    </location>
</feature>
<feature type="strand" evidence="23">
    <location>
        <begin position="142"/>
        <end position="145"/>
    </location>
</feature>
<feature type="helix" evidence="26">
    <location>
        <begin position="148"/>
        <end position="154"/>
    </location>
</feature>
<feature type="strand" evidence="26">
    <location>
        <begin position="157"/>
        <end position="161"/>
    </location>
</feature>
<feature type="helix" evidence="26">
    <location>
        <begin position="166"/>
        <end position="170"/>
    </location>
</feature>
<feature type="strand" evidence="23">
    <location>
        <begin position="174"/>
        <end position="178"/>
    </location>
</feature>
<feature type="helix" evidence="26">
    <location>
        <begin position="182"/>
        <end position="197"/>
    </location>
</feature>
<feature type="helix" evidence="26">
    <location>
        <begin position="198"/>
        <end position="201"/>
    </location>
</feature>
<feature type="strand" evidence="26">
    <location>
        <begin position="203"/>
        <end position="213"/>
    </location>
</feature>
<feature type="helix" evidence="26">
    <location>
        <begin position="215"/>
        <end position="225"/>
    </location>
</feature>
<feature type="helix" evidence="26">
    <location>
        <begin position="227"/>
        <end position="229"/>
    </location>
</feature>
<feature type="turn" evidence="26">
    <location>
        <begin position="230"/>
        <end position="232"/>
    </location>
</feature>
<feature type="strand" evidence="26">
    <location>
        <begin position="234"/>
        <end position="240"/>
    </location>
</feature>
<feature type="turn" evidence="22">
    <location>
        <begin position="246"/>
        <end position="248"/>
    </location>
</feature>
<feature type="helix" evidence="26">
    <location>
        <begin position="253"/>
        <end position="264"/>
    </location>
</feature>
<feature type="helix" evidence="26">
    <location>
        <begin position="271"/>
        <end position="279"/>
    </location>
</feature>
<feature type="helix" evidence="26">
    <location>
        <begin position="283"/>
        <end position="288"/>
    </location>
</feature>
<feature type="helix" evidence="26">
    <location>
        <begin position="301"/>
        <end position="304"/>
    </location>
</feature>
<feature type="strand" evidence="26">
    <location>
        <begin position="313"/>
        <end position="316"/>
    </location>
</feature>
<feature type="helix" evidence="26">
    <location>
        <begin position="320"/>
        <end position="322"/>
    </location>
</feature>
<feature type="helix" evidence="26">
    <location>
        <begin position="324"/>
        <end position="327"/>
    </location>
</feature>
<feature type="strand" evidence="26">
    <location>
        <begin position="330"/>
        <end position="337"/>
    </location>
</feature>
<feature type="turn" evidence="26">
    <location>
        <begin position="338"/>
        <end position="341"/>
    </location>
</feature>
<feature type="helix" evidence="26">
    <location>
        <begin position="342"/>
        <end position="348"/>
    </location>
</feature>
<feature type="helix" evidence="26">
    <location>
        <begin position="350"/>
        <end position="352"/>
    </location>
</feature>
<feature type="strand" evidence="23">
    <location>
        <begin position="355"/>
        <end position="357"/>
    </location>
</feature>
<feature type="helix" evidence="26">
    <location>
        <begin position="361"/>
        <end position="371"/>
    </location>
</feature>
<feature type="helix" evidence="26">
    <location>
        <begin position="373"/>
        <end position="375"/>
    </location>
</feature>
<feature type="helix" evidence="26">
    <location>
        <begin position="376"/>
        <end position="388"/>
    </location>
</feature>
<feature type="helix" evidence="26">
    <location>
        <begin position="389"/>
        <end position="391"/>
    </location>
</feature>
<feature type="strand" evidence="25">
    <location>
        <begin position="392"/>
        <end position="394"/>
    </location>
</feature>
<feature type="helix" evidence="26">
    <location>
        <begin position="397"/>
        <end position="412"/>
    </location>
</feature>
<feature type="helix" evidence="26">
    <location>
        <begin position="414"/>
        <end position="427"/>
    </location>
</feature>
<feature type="strand" evidence="26">
    <location>
        <begin position="433"/>
        <end position="438"/>
    </location>
</feature>
<feature type="turn" evidence="24">
    <location>
        <begin position="455"/>
        <end position="457"/>
    </location>
</feature>
<feature type="helix" evidence="26">
    <location>
        <begin position="459"/>
        <end position="462"/>
    </location>
</feature>
<feature type="helix" evidence="26">
    <location>
        <begin position="465"/>
        <end position="468"/>
    </location>
</feature>
<feature type="helix" evidence="26">
    <location>
        <begin position="470"/>
        <end position="472"/>
    </location>
</feature>
<feature type="helix" evidence="26">
    <location>
        <begin position="475"/>
        <end position="494"/>
    </location>
</feature>
<feature type="strand" evidence="26">
    <location>
        <begin position="499"/>
        <end position="502"/>
    </location>
</feature>
<feature type="turn" evidence="26">
    <location>
        <begin position="513"/>
        <end position="515"/>
    </location>
</feature>
<feature type="strand" evidence="26">
    <location>
        <begin position="517"/>
        <end position="521"/>
    </location>
</feature>
<feature type="helix" evidence="26">
    <location>
        <begin position="527"/>
        <end position="529"/>
    </location>
</feature>
<feature type="strand" evidence="26">
    <location>
        <begin position="530"/>
        <end position="532"/>
    </location>
</feature>
<feature type="helix" evidence="26">
    <location>
        <begin position="536"/>
        <end position="543"/>
    </location>
</feature>
<feature type="turn" evidence="26">
    <location>
        <begin position="544"/>
        <end position="548"/>
    </location>
</feature>